<keyword id="KW-0687">Ribonucleoprotein</keyword>
<keyword id="KW-0689">Ribosomal protein</keyword>
<gene>
    <name evidence="1" type="primary">rpmH</name>
    <name type="ordered locus">SFV_3809</name>
</gene>
<organism>
    <name type="scientific">Shigella flexneri serotype 5b (strain 8401)</name>
    <dbReference type="NCBI Taxonomy" id="373384"/>
    <lineage>
        <taxon>Bacteria</taxon>
        <taxon>Pseudomonadati</taxon>
        <taxon>Pseudomonadota</taxon>
        <taxon>Gammaproteobacteria</taxon>
        <taxon>Enterobacterales</taxon>
        <taxon>Enterobacteriaceae</taxon>
        <taxon>Shigella</taxon>
    </lineage>
</organism>
<evidence type="ECO:0000255" key="1">
    <source>
        <dbReference type="HAMAP-Rule" id="MF_00391"/>
    </source>
</evidence>
<evidence type="ECO:0000305" key="2"/>
<name>RL34_SHIF8</name>
<sequence length="46" mass="5380">MKRTFQPSVLKRNRSHGFRARMATKNGRQVLARRRAKGRARLTVSK</sequence>
<proteinExistence type="inferred from homology"/>
<protein>
    <recommendedName>
        <fullName evidence="1">Large ribosomal subunit protein bL34</fullName>
    </recommendedName>
    <alternativeName>
        <fullName evidence="2">50S ribosomal protein L34</fullName>
    </alternativeName>
</protein>
<reference key="1">
    <citation type="journal article" date="2006" name="BMC Genomics">
        <title>Complete genome sequence of Shigella flexneri 5b and comparison with Shigella flexneri 2a.</title>
        <authorList>
            <person name="Nie H."/>
            <person name="Yang F."/>
            <person name="Zhang X."/>
            <person name="Yang J."/>
            <person name="Chen L."/>
            <person name="Wang J."/>
            <person name="Xiong Z."/>
            <person name="Peng J."/>
            <person name="Sun L."/>
            <person name="Dong J."/>
            <person name="Xue Y."/>
            <person name="Xu X."/>
            <person name="Chen S."/>
            <person name="Yao Z."/>
            <person name="Shen Y."/>
            <person name="Jin Q."/>
        </authorList>
    </citation>
    <scope>NUCLEOTIDE SEQUENCE [LARGE SCALE GENOMIC DNA]</scope>
    <source>
        <strain>8401</strain>
    </source>
</reference>
<accession>Q0SYP3</accession>
<comment type="similarity">
    <text evidence="1">Belongs to the bacterial ribosomal protein bL34 family.</text>
</comment>
<dbReference type="EMBL" id="CP000266">
    <property type="protein sequence ID" value="ABF05822.1"/>
    <property type="molecule type" value="Genomic_DNA"/>
</dbReference>
<dbReference type="RefSeq" id="WP_000831330.1">
    <property type="nucleotide sequence ID" value="NC_008258.1"/>
</dbReference>
<dbReference type="SMR" id="Q0SYP3"/>
<dbReference type="GeneID" id="98190980"/>
<dbReference type="KEGG" id="sfv:SFV_3809"/>
<dbReference type="HOGENOM" id="CLU_129938_2_1_6"/>
<dbReference type="Proteomes" id="UP000000659">
    <property type="component" value="Chromosome"/>
</dbReference>
<dbReference type="GO" id="GO:1990904">
    <property type="term" value="C:ribonucleoprotein complex"/>
    <property type="evidence" value="ECO:0007669"/>
    <property type="project" value="UniProtKB-KW"/>
</dbReference>
<dbReference type="GO" id="GO:0005840">
    <property type="term" value="C:ribosome"/>
    <property type="evidence" value="ECO:0007669"/>
    <property type="project" value="UniProtKB-KW"/>
</dbReference>
<dbReference type="GO" id="GO:0003735">
    <property type="term" value="F:structural constituent of ribosome"/>
    <property type="evidence" value="ECO:0007669"/>
    <property type="project" value="InterPro"/>
</dbReference>
<dbReference type="GO" id="GO:0006412">
    <property type="term" value="P:translation"/>
    <property type="evidence" value="ECO:0007669"/>
    <property type="project" value="UniProtKB-UniRule"/>
</dbReference>
<dbReference type="FunFam" id="1.10.287.3980:FF:000001">
    <property type="entry name" value="Mitochondrial ribosomal protein L34"/>
    <property type="match status" value="1"/>
</dbReference>
<dbReference type="Gene3D" id="1.10.287.3980">
    <property type="match status" value="1"/>
</dbReference>
<dbReference type="HAMAP" id="MF_00391">
    <property type="entry name" value="Ribosomal_bL34"/>
    <property type="match status" value="1"/>
</dbReference>
<dbReference type="InterPro" id="IPR000271">
    <property type="entry name" value="Ribosomal_bL34"/>
</dbReference>
<dbReference type="InterPro" id="IPR020939">
    <property type="entry name" value="Ribosomal_bL34_CS"/>
</dbReference>
<dbReference type="NCBIfam" id="TIGR01030">
    <property type="entry name" value="rpmH_bact"/>
    <property type="match status" value="1"/>
</dbReference>
<dbReference type="PANTHER" id="PTHR14503:SF4">
    <property type="entry name" value="LARGE RIBOSOMAL SUBUNIT PROTEIN BL34M"/>
    <property type="match status" value="1"/>
</dbReference>
<dbReference type="PANTHER" id="PTHR14503">
    <property type="entry name" value="MITOCHONDRIAL RIBOSOMAL PROTEIN 34 FAMILY MEMBER"/>
    <property type="match status" value="1"/>
</dbReference>
<dbReference type="Pfam" id="PF00468">
    <property type="entry name" value="Ribosomal_L34"/>
    <property type="match status" value="1"/>
</dbReference>
<dbReference type="PROSITE" id="PS00784">
    <property type="entry name" value="RIBOSOMAL_L34"/>
    <property type="match status" value="1"/>
</dbReference>
<feature type="chain" id="PRO_1000013449" description="Large ribosomal subunit protein bL34">
    <location>
        <begin position="1"/>
        <end position="46"/>
    </location>
</feature>